<protein>
    <recommendedName>
        <fullName>Uncharacterized protein ORFA</fullName>
    </recommendedName>
</protein>
<reference key="1">
    <citation type="journal article" date="2006" name="J. Virol.">
        <title>Psittacid herpesvirus 1 and infectious laryngotracheitis virus: Comparative genome sequence analysis of two avian alphaherpesviruses.</title>
        <authorList>
            <person name="Thureen D.R."/>
            <person name="Keeler C.L. Jr."/>
        </authorList>
    </citation>
    <scope>NUCLEOTIDE SEQUENCE [LARGE SCALE GENOMIC DNA]</scope>
</reference>
<gene>
    <name type="primary">ORFA</name>
</gene>
<sequence length="396" mass="44157">MDLAGLSALAKPYAVLASEGLTQLVWTERDRISLMGPVLNPECGLIPTCWPAVVDSIRRCPDRDLDVMRAHELTIGGRTYWSLSYSETLFELNETWECIALPFVPGRLGRWKEAPPLASMERVASEVEEYLGDRDVTNCSVRFAYIMGMDVTIPEGVESIRWDSTGRPFMVFSEDAGAETVERVCRESFDIDSCVVFPLSTAPMTGNNLFLTCILCYGPRNMTPAVRAGVEVLAKKAIMQHTNSGRSFNCFDCRMETRDTPIGPEVVFGSGSIFISPEEKAELARNGRLLSTDKVVELVGDSGRKRPAVISWQSAWRKRKARRVGFLPASVRLQTDALDGSAAAGRRFLQQYCGTYVTRQLGFNERDARLRLRRGPYVTTAPRGVVFEDETTDPLR</sequence>
<proteinExistence type="predicted"/>
<feature type="chain" id="PRO_0000406819" description="Uncharacterized protein ORFA">
    <location>
        <begin position="1"/>
        <end position="396"/>
    </location>
</feature>
<keyword id="KW-1185">Reference proteome</keyword>
<dbReference type="EMBL" id="AY372243">
    <property type="protein sequence ID" value="AAQ73695.1"/>
    <property type="molecule type" value="Genomic_DNA"/>
</dbReference>
<dbReference type="RefSeq" id="NP_944389.1">
    <property type="nucleotide sequence ID" value="NC_005264.1"/>
</dbReference>
<dbReference type="GeneID" id="4237759"/>
<dbReference type="KEGG" id="vg:4237759"/>
<dbReference type="Proteomes" id="UP000006840">
    <property type="component" value="Segment"/>
</dbReference>
<name>ORFA_PSHV1</name>
<organism>
    <name type="scientific">Psittacid herpesvirus 1 (isolate Amazon parrot/-/97-0001/1997)</name>
    <name type="common">PsHV-1</name>
    <name type="synonym">Pacheco's disease virus</name>
    <dbReference type="NCBI Taxonomy" id="670426"/>
    <lineage>
        <taxon>Viruses</taxon>
        <taxon>Duplodnaviria</taxon>
        <taxon>Heunggongvirae</taxon>
        <taxon>Peploviricota</taxon>
        <taxon>Herviviricetes</taxon>
        <taxon>Herpesvirales</taxon>
        <taxon>Orthoherpesviridae</taxon>
        <taxon>Alphaherpesvirinae</taxon>
        <taxon>Iltovirus</taxon>
        <taxon>Iltovirus psittacidalpha1</taxon>
        <taxon>Psittacid alphaherpesvirus 1</taxon>
    </lineage>
</organism>
<accession>Q6UDL5</accession>
<organismHost>
    <name type="scientific">Amazona oratrix</name>
    <name type="common">yellow-headed parrot</name>
    <dbReference type="NCBI Taxonomy" id="152276"/>
</organismHost>